<accession>O34952</accession>
<accession>Q79EU0</accession>
<dbReference type="EC" id="2.7.8.-"/>
<dbReference type="EMBL" id="D86417">
    <property type="protein sequence ID" value="BAA22298.1"/>
    <property type="molecule type" value="Genomic_DNA"/>
</dbReference>
<dbReference type="EMBL" id="AL009126">
    <property type="protein sequence ID" value="CAB12600.1"/>
    <property type="molecule type" value="Genomic_DNA"/>
</dbReference>
<dbReference type="PIR" id="C69810">
    <property type="entry name" value="C69810"/>
</dbReference>
<dbReference type="RefSeq" id="WP_003233694.1">
    <property type="nucleotide sequence ID" value="NZ_OZ025638.1"/>
</dbReference>
<dbReference type="PDB" id="2W8D">
    <property type="method" value="X-ray"/>
    <property type="resolution" value="2.35 A"/>
    <property type="chains" value="A/B=214-649"/>
</dbReference>
<dbReference type="PDBsum" id="2W8D"/>
<dbReference type="SMR" id="O34952"/>
<dbReference type="FunCoup" id="O34952">
    <property type="interactions" value="121"/>
</dbReference>
<dbReference type="STRING" id="224308.BSU07710"/>
<dbReference type="PaxDb" id="224308-BSU07710"/>
<dbReference type="EnsemblBacteria" id="CAB12600">
    <property type="protein sequence ID" value="CAB12600"/>
    <property type="gene ID" value="BSU_07710"/>
</dbReference>
<dbReference type="GeneID" id="939200"/>
<dbReference type="KEGG" id="bsu:BSU07710"/>
<dbReference type="PATRIC" id="fig|224308.179.peg.837"/>
<dbReference type="eggNOG" id="COG1368">
    <property type="taxonomic scope" value="Bacteria"/>
</dbReference>
<dbReference type="InParanoid" id="O34952"/>
<dbReference type="OrthoDB" id="5901192at2"/>
<dbReference type="PhylomeDB" id="O34952"/>
<dbReference type="BioCyc" id="BSUB:BSU07710-MONOMER"/>
<dbReference type="UniPathway" id="UPA00556"/>
<dbReference type="EvolutionaryTrace" id="O34952"/>
<dbReference type="Proteomes" id="UP000001570">
    <property type="component" value="Chromosome"/>
</dbReference>
<dbReference type="GO" id="GO:0005576">
    <property type="term" value="C:extracellular region"/>
    <property type="evidence" value="ECO:0007669"/>
    <property type="project" value="UniProtKB-SubCell"/>
</dbReference>
<dbReference type="GO" id="GO:0016020">
    <property type="term" value="C:membrane"/>
    <property type="evidence" value="ECO:0000318"/>
    <property type="project" value="GO_Central"/>
</dbReference>
<dbReference type="GO" id="GO:0005886">
    <property type="term" value="C:plasma membrane"/>
    <property type="evidence" value="ECO:0007669"/>
    <property type="project" value="UniProtKB-SubCell"/>
</dbReference>
<dbReference type="GO" id="GO:0046872">
    <property type="term" value="F:metal ion binding"/>
    <property type="evidence" value="ECO:0007669"/>
    <property type="project" value="UniProtKB-KW"/>
</dbReference>
<dbReference type="GO" id="GO:0016740">
    <property type="term" value="F:transferase activity"/>
    <property type="evidence" value="ECO:0000318"/>
    <property type="project" value="GO_Central"/>
</dbReference>
<dbReference type="GO" id="GO:0071555">
    <property type="term" value="P:cell wall organization"/>
    <property type="evidence" value="ECO:0007669"/>
    <property type="project" value="UniProtKB-KW"/>
</dbReference>
<dbReference type="GO" id="GO:0070395">
    <property type="term" value="P:lipoteichoic acid biosynthetic process"/>
    <property type="evidence" value="ECO:0007669"/>
    <property type="project" value="UniProtKB-UniPathway"/>
</dbReference>
<dbReference type="CDD" id="cd16015">
    <property type="entry name" value="LTA_synthase"/>
    <property type="match status" value="1"/>
</dbReference>
<dbReference type="Gene3D" id="3.30.1120.170">
    <property type="match status" value="1"/>
</dbReference>
<dbReference type="Gene3D" id="3.40.720.10">
    <property type="entry name" value="Alkaline Phosphatase, subunit A"/>
    <property type="match status" value="1"/>
</dbReference>
<dbReference type="InterPro" id="IPR017850">
    <property type="entry name" value="Alkaline_phosphatase_core_sf"/>
</dbReference>
<dbReference type="InterPro" id="IPR012160">
    <property type="entry name" value="LtaS-like"/>
</dbReference>
<dbReference type="InterPro" id="IPR050448">
    <property type="entry name" value="OpgB/LTA_synthase_biosynth"/>
</dbReference>
<dbReference type="InterPro" id="IPR000917">
    <property type="entry name" value="Sulfatase_N"/>
</dbReference>
<dbReference type="PANTHER" id="PTHR47371">
    <property type="entry name" value="LIPOTEICHOIC ACID SYNTHASE"/>
    <property type="match status" value="1"/>
</dbReference>
<dbReference type="PANTHER" id="PTHR47371:SF3">
    <property type="entry name" value="PHOSPHOGLYCEROL TRANSFERASE I"/>
    <property type="match status" value="1"/>
</dbReference>
<dbReference type="Pfam" id="PF00884">
    <property type="entry name" value="Sulfatase"/>
    <property type="match status" value="1"/>
</dbReference>
<dbReference type="PIRSF" id="PIRSF005091">
    <property type="entry name" value="Mmb_sulf_HI1246"/>
    <property type="match status" value="1"/>
</dbReference>
<dbReference type="SUPFAM" id="SSF53649">
    <property type="entry name" value="Alkaline phosphatase-like"/>
    <property type="match status" value="1"/>
</dbReference>
<organism>
    <name type="scientific">Bacillus subtilis (strain 168)</name>
    <dbReference type="NCBI Taxonomy" id="224308"/>
    <lineage>
        <taxon>Bacteria</taxon>
        <taxon>Bacillati</taxon>
        <taxon>Bacillota</taxon>
        <taxon>Bacilli</taxon>
        <taxon>Bacillales</taxon>
        <taxon>Bacillaceae</taxon>
        <taxon>Bacillus</taxon>
    </lineage>
</organism>
<name>LTAS2_BACSU</name>
<evidence type="ECO:0000250" key="1"/>
<evidence type="ECO:0000255" key="2"/>
<evidence type="ECO:0000256" key="3">
    <source>
        <dbReference type="SAM" id="MobiDB-lite"/>
    </source>
</evidence>
<evidence type="ECO:0000269" key="4">
    <source>
    </source>
</evidence>
<evidence type="ECO:0000269" key="5">
    <source>
    </source>
</evidence>
<evidence type="ECO:0000305" key="6"/>
<evidence type="ECO:0007829" key="7">
    <source>
        <dbReference type="PDB" id="2W8D"/>
    </source>
</evidence>
<comment type="function">
    <text evidence="5">Catalyzes the polymerization of lipoteichoic acid (LTA) polyglycerol phosphate, a reaction that presumably uses phosphatidylglycerol (PG) as substrate.</text>
</comment>
<comment type="pathway">
    <text>Cell wall biogenesis; lipoteichoic acid biosynthesis.</text>
</comment>
<comment type="subcellular location">
    <subcellularLocation>
        <location evidence="6">Cell membrane</location>
        <topology evidence="6">Multi-pass membrane protein</topology>
    </subcellularLocation>
</comment>
<comment type="subcellular location">
    <molecule>Processed glycerol phosphate lipoteichoic acid synthase 2</molecule>
    <subcellularLocation>
        <location>Secreted</location>
    </subcellularLocation>
    <text>The secretion into the extracellular medium is dependent on SecA and Ffh.</text>
</comment>
<comment type="PTM">
    <text evidence="4">Proteolytically cleaved.</text>
</comment>
<comment type="miscellaneous">
    <text>Restores staphylococcal growth after ltaS depletion.</text>
</comment>
<comment type="similarity">
    <text evidence="6">Belongs to the LTA synthase family.</text>
</comment>
<sequence>MKTFIKERGLAFFLIAVVLLWIKTYVGYVLNFNLGIDNTIQKILLFVNPLSSSLFFLGFGLLFKKKLQQTAIIVIHFLMSFLLYANIVYYRFFNDFITIPVIMQAKTNGGQLGDSAFSLMRPTDAFYFIDTIILIILAIKVNKPAETSSKKSFRIIFASSILVFLINLAVAESDRPELLTRSFDRNYLVKYLGTYNFTIYDAVQNIKSNSQRALADSSDVTEVENYMKANYDVPNNVYFGKAEGKNVIYVSLESLQSFIIDYKIDGKEVTPFLNKLAHDNETFYFDNFFHQTGQGKTSDAEFMMENSLYPLAQGSVFVNKAQNTLQSVPAILKSKNYTSATFHGNTQTFWNRNEMYKAEGIDKFFDSAYYDMNEENTKNYGMKDKPFFKESMPLLESLPQPFYTKFITLSNHFPFGMDEGDTDFPAGDFGDSVVDNYFQSAHYLDQSIEQFFNDLKKDGLYDKSIIVMYGDHYGISENHNKAMAKVLGKDEITDYDNAQLQRVPLFIHAAGVKGEKVHKYAGDVDVAPTILHLLGVDTKDYLMSGSDILSKEHREVIPFRNGDFISPKYTKISGKYYDTKTGKELDESEVDKSEDSLVKKELEMSDKIINGDLLRFYEPKGFKKVNPSDYDYTKHDEDSSETSKDNEDK</sequence>
<proteinExistence type="evidence at protein level"/>
<protein>
    <recommendedName>
        <fullName>Lipoteichoic acid synthase 2</fullName>
    </recommendedName>
    <component>
        <recommendedName>
            <fullName>Glycerol phosphate lipoteichoic acid synthase 2</fullName>
            <shortName>LTA synthase 1</shortName>
            <ecNumber>2.7.8.-</ecNumber>
        </recommendedName>
        <alternativeName>
            <fullName>Polyglycerol phosphate synthase 2</fullName>
        </alternativeName>
    </component>
    <component>
        <recommendedName>
            <fullName>Processed glycerol phosphate lipoteichoic acid synthase 2</fullName>
        </recommendedName>
    </component>
</protein>
<feature type="chain" id="PRO_0000305348" description="Glycerol phosphate lipoteichoic acid synthase 2">
    <location>
        <begin position="1"/>
        <end position="215"/>
    </location>
</feature>
<feature type="chain" id="PRO_0000305349" description="Processed glycerol phosphate lipoteichoic acid synthase 2">
    <location>
        <begin position="216"/>
        <end position="649"/>
    </location>
</feature>
<feature type="topological domain" description="Cytoplasmic" evidence="2">
    <location>
        <begin position="1"/>
        <end position="9"/>
    </location>
</feature>
<feature type="transmembrane region" description="Helical" evidence="2">
    <location>
        <begin position="10"/>
        <end position="30"/>
    </location>
</feature>
<feature type="topological domain" description="Extracellular" evidence="2">
    <location>
        <begin position="31"/>
        <end position="42"/>
    </location>
</feature>
<feature type="transmembrane region" description="Helical" evidence="2">
    <location>
        <begin position="43"/>
        <end position="63"/>
    </location>
</feature>
<feature type="topological domain" description="Cytoplasmic" evidence="2">
    <location>
        <begin position="64"/>
        <end position="69"/>
    </location>
</feature>
<feature type="transmembrane region" description="Helical" evidence="2">
    <location>
        <begin position="70"/>
        <end position="90"/>
    </location>
</feature>
<feature type="topological domain" description="Extracellular" evidence="2">
    <location>
        <begin position="91"/>
        <end position="118"/>
    </location>
</feature>
<feature type="transmembrane region" description="Helical" evidence="2">
    <location>
        <begin position="119"/>
        <end position="139"/>
    </location>
</feature>
<feature type="topological domain" description="Cytoplasmic" evidence="2">
    <location>
        <begin position="140"/>
        <end position="151"/>
    </location>
</feature>
<feature type="transmembrane region" description="Helical" evidence="2">
    <location>
        <begin position="152"/>
        <end position="172"/>
    </location>
</feature>
<feature type="topological domain" description="Extracellular" evidence="2">
    <location>
        <begin position="173"/>
        <end position="649"/>
    </location>
</feature>
<feature type="region of interest" description="Disordered" evidence="3">
    <location>
        <begin position="622"/>
        <end position="649"/>
    </location>
</feature>
<feature type="compositionally biased region" description="Basic and acidic residues" evidence="3">
    <location>
        <begin position="631"/>
        <end position="649"/>
    </location>
</feature>
<feature type="active site" evidence="1">
    <location>
        <position position="297"/>
    </location>
</feature>
<feature type="binding site" evidence="1">
    <location>
        <position position="253"/>
    </location>
    <ligand>
        <name>Mn(2+)</name>
        <dbReference type="ChEBI" id="CHEBI:29035"/>
    </ligand>
</feature>
<feature type="binding site" evidence="1">
    <location>
        <position position="297"/>
    </location>
    <ligand>
        <name>Mn(2+)</name>
        <dbReference type="ChEBI" id="CHEBI:29035"/>
    </ligand>
</feature>
<feature type="binding site" evidence="1">
    <location>
        <position position="412"/>
    </location>
    <ligand>
        <name>substrate</name>
    </ligand>
</feature>
<feature type="binding site" evidence="1">
    <location>
        <position position="471"/>
    </location>
    <ligand>
        <name>Mn(2+)</name>
        <dbReference type="ChEBI" id="CHEBI:29035"/>
    </ligand>
</feature>
<feature type="binding site" evidence="1">
    <location>
        <position position="472"/>
    </location>
    <ligand>
        <name>Mn(2+)</name>
        <dbReference type="ChEBI" id="CHEBI:29035"/>
    </ligand>
</feature>
<feature type="site" description="Cleavage">
    <location>
        <begin position="215"/>
        <end position="216"/>
    </location>
</feature>
<feature type="helix" evidence="7">
    <location>
        <begin position="219"/>
        <end position="230"/>
    </location>
</feature>
<feature type="turn" evidence="7">
    <location>
        <begin position="236"/>
        <end position="244"/>
    </location>
</feature>
<feature type="strand" evidence="7">
    <location>
        <begin position="246"/>
        <end position="252"/>
    </location>
</feature>
<feature type="helix" evidence="7">
    <location>
        <begin position="257"/>
        <end position="259"/>
    </location>
</feature>
<feature type="strand" evidence="7">
    <location>
        <begin position="267"/>
        <end position="270"/>
    </location>
</feature>
<feature type="helix" evidence="7">
    <location>
        <begin position="271"/>
        <end position="278"/>
    </location>
</feature>
<feature type="strand" evidence="7">
    <location>
        <begin position="279"/>
        <end position="281"/>
    </location>
</feature>
<feature type="strand" evidence="7">
    <location>
        <begin position="283"/>
        <end position="289"/>
    </location>
</feature>
<feature type="helix" evidence="7">
    <location>
        <begin position="296"/>
        <end position="306"/>
    </location>
</feature>
<feature type="strand" evidence="7">
    <location>
        <begin position="312"/>
        <end position="314"/>
    </location>
</feature>
<feature type="helix" evidence="7">
    <location>
        <begin position="316"/>
        <end position="319"/>
    </location>
</feature>
<feature type="helix" evidence="7">
    <location>
        <begin position="328"/>
        <end position="331"/>
    </location>
</feature>
<feature type="helix" evidence="7">
    <location>
        <begin position="332"/>
        <end position="335"/>
    </location>
</feature>
<feature type="strand" evidence="7">
    <location>
        <begin position="338"/>
        <end position="345"/>
    </location>
</feature>
<feature type="helix" evidence="7">
    <location>
        <begin position="349"/>
        <end position="351"/>
    </location>
</feature>
<feature type="helix" evidence="7">
    <location>
        <begin position="352"/>
        <end position="358"/>
    </location>
</feature>
<feature type="strand" evidence="7">
    <location>
        <begin position="363"/>
        <end position="365"/>
    </location>
</feature>
<feature type="helix" evidence="7">
    <location>
        <begin position="367"/>
        <end position="369"/>
    </location>
</feature>
<feature type="helix" evidence="7">
    <location>
        <begin position="374"/>
        <end position="376"/>
    </location>
</feature>
<feature type="strand" evidence="7">
    <location>
        <begin position="379"/>
        <end position="382"/>
    </location>
</feature>
<feature type="helix" evidence="7">
    <location>
        <begin position="384"/>
        <end position="396"/>
    </location>
</feature>
<feature type="strand" evidence="7">
    <location>
        <begin position="400"/>
        <end position="407"/>
    </location>
</feature>
<feature type="helix" evidence="7">
    <location>
        <begin position="432"/>
        <end position="457"/>
    </location>
</feature>
<feature type="strand" evidence="7">
    <location>
        <begin position="464"/>
        <end position="470"/>
    </location>
</feature>
<feature type="helix" evidence="7">
    <location>
        <begin position="477"/>
        <end position="479"/>
    </location>
</feature>
<feature type="helix" evidence="7">
    <location>
        <begin position="480"/>
        <end position="486"/>
    </location>
</feature>
<feature type="helix" evidence="7">
    <location>
        <begin position="494"/>
        <end position="499"/>
    </location>
</feature>
<feature type="strand" evidence="7">
    <location>
        <begin position="505"/>
        <end position="509"/>
    </location>
</feature>
<feature type="helix" evidence="7">
    <location>
        <begin position="523"/>
        <end position="525"/>
    </location>
</feature>
<feature type="helix" evidence="7">
    <location>
        <begin position="526"/>
        <end position="533"/>
    </location>
</feature>
<feature type="strand" evidence="7">
    <location>
        <begin position="567"/>
        <end position="572"/>
    </location>
</feature>
<feature type="strand" evidence="7">
    <location>
        <begin position="575"/>
        <end position="578"/>
    </location>
</feature>
<feature type="turn" evidence="7">
    <location>
        <begin position="579"/>
        <end position="581"/>
    </location>
</feature>
<feature type="helix" evidence="7">
    <location>
        <begin position="587"/>
        <end position="589"/>
    </location>
</feature>
<feature type="helix" evidence="7">
    <location>
        <begin position="593"/>
        <end position="610"/>
    </location>
</feature>
<feature type="helix" evidence="7">
    <location>
        <begin position="613"/>
        <end position="616"/>
    </location>
</feature>
<feature type="helix" evidence="7">
    <location>
        <begin position="627"/>
        <end position="629"/>
    </location>
</feature>
<gene>
    <name type="primary">ltaS2</name>
    <name type="synonym">yflE</name>
    <name type="ordered locus">BSU07710</name>
</gene>
<reference key="1">
    <citation type="journal article" date="1997" name="Gene">
        <title>Cloning and sequencing of a 35.7 kb in the 70 degree-73 degree region of the Bacillus subtilis genome reveal genes for a new two-component system, three spore germination proteins, an iron uptake system and a general stress response protein.</title>
        <authorList>
            <person name="Yamamoto H."/>
            <person name="Uchiyama S."/>
            <person name="Nugroho F.A."/>
            <person name="Sekiguchi J."/>
        </authorList>
    </citation>
    <scope>NUCLEOTIDE SEQUENCE [GENOMIC DNA]</scope>
    <source>
        <strain>168 / AC327</strain>
    </source>
</reference>
<reference key="2">
    <citation type="journal article" date="1997" name="Nature">
        <title>The complete genome sequence of the Gram-positive bacterium Bacillus subtilis.</title>
        <authorList>
            <person name="Kunst F."/>
            <person name="Ogasawara N."/>
            <person name="Moszer I."/>
            <person name="Albertini A.M."/>
            <person name="Alloni G."/>
            <person name="Azevedo V."/>
            <person name="Bertero M.G."/>
            <person name="Bessieres P."/>
            <person name="Bolotin A."/>
            <person name="Borchert S."/>
            <person name="Borriss R."/>
            <person name="Boursier L."/>
            <person name="Brans A."/>
            <person name="Braun M."/>
            <person name="Brignell S.C."/>
            <person name="Bron S."/>
            <person name="Brouillet S."/>
            <person name="Bruschi C.V."/>
            <person name="Caldwell B."/>
            <person name="Capuano V."/>
            <person name="Carter N.M."/>
            <person name="Choi S.-K."/>
            <person name="Codani J.-J."/>
            <person name="Connerton I.F."/>
            <person name="Cummings N.J."/>
            <person name="Daniel R.A."/>
            <person name="Denizot F."/>
            <person name="Devine K.M."/>
            <person name="Duesterhoeft A."/>
            <person name="Ehrlich S.D."/>
            <person name="Emmerson P.T."/>
            <person name="Entian K.-D."/>
            <person name="Errington J."/>
            <person name="Fabret C."/>
            <person name="Ferrari E."/>
            <person name="Foulger D."/>
            <person name="Fritz C."/>
            <person name="Fujita M."/>
            <person name="Fujita Y."/>
            <person name="Fuma S."/>
            <person name="Galizzi A."/>
            <person name="Galleron N."/>
            <person name="Ghim S.-Y."/>
            <person name="Glaser P."/>
            <person name="Goffeau A."/>
            <person name="Golightly E.J."/>
            <person name="Grandi G."/>
            <person name="Guiseppi G."/>
            <person name="Guy B.J."/>
            <person name="Haga K."/>
            <person name="Haiech J."/>
            <person name="Harwood C.R."/>
            <person name="Henaut A."/>
            <person name="Hilbert H."/>
            <person name="Holsappel S."/>
            <person name="Hosono S."/>
            <person name="Hullo M.-F."/>
            <person name="Itaya M."/>
            <person name="Jones L.-M."/>
            <person name="Joris B."/>
            <person name="Karamata D."/>
            <person name="Kasahara Y."/>
            <person name="Klaerr-Blanchard M."/>
            <person name="Klein C."/>
            <person name="Kobayashi Y."/>
            <person name="Koetter P."/>
            <person name="Koningstein G."/>
            <person name="Krogh S."/>
            <person name="Kumano M."/>
            <person name="Kurita K."/>
            <person name="Lapidus A."/>
            <person name="Lardinois S."/>
            <person name="Lauber J."/>
            <person name="Lazarevic V."/>
            <person name="Lee S.-M."/>
            <person name="Levine A."/>
            <person name="Liu H."/>
            <person name="Masuda S."/>
            <person name="Mauel C."/>
            <person name="Medigue C."/>
            <person name="Medina N."/>
            <person name="Mellado R.P."/>
            <person name="Mizuno M."/>
            <person name="Moestl D."/>
            <person name="Nakai S."/>
            <person name="Noback M."/>
            <person name="Noone D."/>
            <person name="O'Reilly M."/>
            <person name="Ogawa K."/>
            <person name="Ogiwara A."/>
            <person name="Oudega B."/>
            <person name="Park S.-H."/>
            <person name="Parro V."/>
            <person name="Pohl T.M."/>
            <person name="Portetelle D."/>
            <person name="Porwollik S."/>
            <person name="Prescott A.M."/>
            <person name="Presecan E."/>
            <person name="Pujic P."/>
            <person name="Purnelle B."/>
            <person name="Rapoport G."/>
            <person name="Rey M."/>
            <person name="Reynolds S."/>
            <person name="Rieger M."/>
            <person name="Rivolta C."/>
            <person name="Rocha E."/>
            <person name="Roche B."/>
            <person name="Rose M."/>
            <person name="Sadaie Y."/>
            <person name="Sato T."/>
            <person name="Scanlan E."/>
            <person name="Schleich S."/>
            <person name="Schroeter R."/>
            <person name="Scoffone F."/>
            <person name="Sekiguchi J."/>
            <person name="Sekowska A."/>
            <person name="Seror S.J."/>
            <person name="Serror P."/>
            <person name="Shin B.-S."/>
            <person name="Soldo B."/>
            <person name="Sorokin A."/>
            <person name="Tacconi E."/>
            <person name="Takagi T."/>
            <person name="Takahashi H."/>
            <person name="Takemaru K."/>
            <person name="Takeuchi M."/>
            <person name="Tamakoshi A."/>
            <person name="Tanaka T."/>
            <person name="Terpstra P."/>
            <person name="Tognoni A."/>
            <person name="Tosato V."/>
            <person name="Uchiyama S."/>
            <person name="Vandenbol M."/>
            <person name="Vannier F."/>
            <person name="Vassarotti A."/>
            <person name="Viari A."/>
            <person name="Wambutt R."/>
            <person name="Wedler E."/>
            <person name="Wedler H."/>
            <person name="Weitzenegger T."/>
            <person name="Winters P."/>
            <person name="Wipat A."/>
            <person name="Yamamoto H."/>
            <person name="Yamane K."/>
            <person name="Yasumoto K."/>
            <person name="Yata K."/>
            <person name="Yoshida K."/>
            <person name="Yoshikawa H.-F."/>
            <person name="Zumstein E."/>
            <person name="Yoshikawa H."/>
            <person name="Danchin A."/>
        </authorList>
    </citation>
    <scope>NUCLEOTIDE SEQUENCE [LARGE SCALE GENOMIC DNA]</scope>
    <source>
        <strain>168</strain>
    </source>
</reference>
<reference key="3">
    <citation type="journal article" date="2000" name="Microbiology">
        <title>Proteome analysis of Bacillus subtilis extracellular proteins: a two-dimensional protein electrophoretic study.</title>
        <authorList>
            <person name="Hirose I."/>
            <person name="Sano K."/>
            <person name="Shioda I."/>
            <person name="Kumano M."/>
            <person name="Nakamura K."/>
            <person name="Yamane K."/>
        </authorList>
    </citation>
    <scope>PROTEIN SEQUENCE OF 216-226</scope>
    <scope>CLEAVAGE SITE</scope>
    <scope>SUBCELLULAR LOCATION</scope>
    <source>
        <strain>168</strain>
    </source>
</reference>
<reference key="4">
    <citation type="journal article" date="2007" name="Proc. Natl. Acad. Sci. U.S.A.">
        <title>Synthesis of glycerol phosphate lipoteichoic acid in Staphylococcus aureus.</title>
        <authorList>
            <person name="Gruendling A."/>
            <person name="Schneewind O."/>
        </authorList>
    </citation>
    <scope>FUNCTION IN LTA BIOSYNTHESIS</scope>
    <source>
        <strain>168</strain>
    </source>
</reference>
<keyword id="KW-0002">3D-structure</keyword>
<keyword id="KW-1003">Cell membrane</keyword>
<keyword id="KW-0961">Cell wall biogenesis/degradation</keyword>
<keyword id="KW-0903">Direct protein sequencing</keyword>
<keyword id="KW-0464">Manganese</keyword>
<keyword id="KW-0472">Membrane</keyword>
<keyword id="KW-0479">Metal-binding</keyword>
<keyword id="KW-1185">Reference proteome</keyword>
<keyword id="KW-0964">Secreted</keyword>
<keyword id="KW-0808">Transferase</keyword>
<keyword id="KW-0812">Transmembrane</keyword>
<keyword id="KW-1133">Transmembrane helix</keyword>